<protein>
    <recommendedName>
        <fullName>Scutellin-5</fullName>
    </recommendedName>
</protein>
<name>IVBS5_OXYSC</name>
<feature type="signal peptide" evidence="2">
    <location>
        <begin position="1"/>
        <end position="24"/>
    </location>
</feature>
<feature type="chain" id="PRO_5000395641" description="Scutellin-5">
    <location>
        <begin position="25"/>
        <end position="79"/>
    </location>
</feature>
<feature type="domain" description="BPTI/Kunitz inhibitor" evidence="3">
    <location>
        <begin position="31"/>
        <end position="79"/>
    </location>
</feature>
<feature type="disulfide bond" evidence="3">
    <location>
        <begin position="40"/>
        <end position="64"/>
    </location>
</feature>
<dbReference type="EMBL" id="EU401841">
    <property type="protein sequence ID" value="ACC77790.1"/>
    <property type="molecule type" value="Genomic_DNA"/>
</dbReference>
<dbReference type="SMR" id="B5L5Q3"/>
<dbReference type="GO" id="GO:0005576">
    <property type="term" value="C:extracellular region"/>
    <property type="evidence" value="ECO:0007669"/>
    <property type="project" value="UniProtKB-SubCell"/>
</dbReference>
<dbReference type="GO" id="GO:0004867">
    <property type="term" value="F:serine-type endopeptidase inhibitor activity"/>
    <property type="evidence" value="ECO:0007669"/>
    <property type="project" value="UniProtKB-KW"/>
</dbReference>
<dbReference type="Gene3D" id="4.10.410.10">
    <property type="entry name" value="Pancreatic trypsin inhibitor Kunitz domain"/>
    <property type="match status" value="1"/>
</dbReference>
<dbReference type="InterPro" id="IPR002223">
    <property type="entry name" value="Kunitz_BPTI"/>
</dbReference>
<dbReference type="InterPro" id="IPR036880">
    <property type="entry name" value="Kunitz_BPTI_sf"/>
</dbReference>
<dbReference type="InterPro" id="IPR020901">
    <property type="entry name" value="Prtase_inh_Kunz-CS"/>
</dbReference>
<dbReference type="InterPro" id="IPR050098">
    <property type="entry name" value="TFPI/VKTCI-like"/>
</dbReference>
<dbReference type="PANTHER" id="PTHR10083">
    <property type="entry name" value="KUNITZ-TYPE PROTEASE INHIBITOR-RELATED"/>
    <property type="match status" value="1"/>
</dbReference>
<dbReference type="Pfam" id="PF00014">
    <property type="entry name" value="Kunitz_BPTI"/>
    <property type="match status" value="1"/>
</dbReference>
<dbReference type="PRINTS" id="PR00759">
    <property type="entry name" value="BASICPTASE"/>
</dbReference>
<dbReference type="SMART" id="SM00131">
    <property type="entry name" value="KU"/>
    <property type="match status" value="1"/>
</dbReference>
<dbReference type="SUPFAM" id="SSF57362">
    <property type="entry name" value="BPTI-like"/>
    <property type="match status" value="1"/>
</dbReference>
<dbReference type="PROSITE" id="PS00280">
    <property type="entry name" value="BPTI_KUNITZ_1"/>
    <property type="match status" value="1"/>
</dbReference>
<dbReference type="PROSITE" id="PS50279">
    <property type="entry name" value="BPTI_KUNITZ_2"/>
    <property type="match status" value="1"/>
</dbReference>
<sequence length="79" mass="8848">MSSGGLLLLLGLLTLWEVLTPVSSKDRPKFYELPADIGPCEDFTGAFHYSPREHEYIEFIYGGCEGNANNFNTLEECET</sequence>
<evidence type="ECO:0000250" key="1"/>
<evidence type="ECO:0000255" key="2"/>
<evidence type="ECO:0000255" key="3">
    <source>
        <dbReference type="PROSITE-ProRule" id="PRU00031"/>
    </source>
</evidence>
<evidence type="ECO:0000305" key="4"/>
<proteinExistence type="inferred from homology"/>
<keyword id="KW-1015">Disulfide bond</keyword>
<keyword id="KW-0646">Protease inhibitor</keyword>
<keyword id="KW-0964">Secreted</keyword>
<keyword id="KW-0722">Serine protease inhibitor</keyword>
<keyword id="KW-0732">Signal</keyword>
<comment type="function">
    <text evidence="4">Serine protease inhibitor.</text>
</comment>
<comment type="subcellular location">
    <subcellularLocation>
        <location evidence="1">Secreted</location>
    </subcellularLocation>
</comment>
<organism>
    <name type="scientific">Oxyuranus scutellatus scutellatus</name>
    <name type="common">Australian taipan</name>
    <name type="synonym">Coastal taipan</name>
    <dbReference type="NCBI Taxonomy" id="8667"/>
    <lineage>
        <taxon>Eukaryota</taxon>
        <taxon>Metazoa</taxon>
        <taxon>Chordata</taxon>
        <taxon>Craniata</taxon>
        <taxon>Vertebrata</taxon>
        <taxon>Euteleostomi</taxon>
        <taxon>Lepidosauria</taxon>
        <taxon>Squamata</taxon>
        <taxon>Bifurcata</taxon>
        <taxon>Unidentata</taxon>
        <taxon>Episquamata</taxon>
        <taxon>Toxicofera</taxon>
        <taxon>Serpentes</taxon>
        <taxon>Colubroidea</taxon>
        <taxon>Elapidae</taxon>
        <taxon>Hydrophiinae</taxon>
        <taxon>Oxyuranus</taxon>
    </lineage>
</organism>
<accession>B5L5Q3</accession>
<reference key="1">
    <citation type="journal article" date="2008" name="Cell. Mol. Life Sci.">
        <title>Common evolution of waprin and Kunitz-like toxin families in Australian venomous snakes.</title>
        <authorList>
            <person name="St Pierre L."/>
            <person name="Earl S.T."/>
            <person name="Filippovich I."/>
            <person name="Sorokina N."/>
            <person name="Masci P.P."/>
            <person name="De Jersey J."/>
            <person name="Lavin M.F."/>
        </authorList>
    </citation>
    <scope>NUCLEOTIDE SEQUENCE [GENOMIC DNA]</scope>
    <source>
        <tissue>Venom gland</tissue>
    </source>
</reference>